<feature type="signal peptide" evidence="3">
    <location>
        <begin position="1"/>
        <end position="19"/>
    </location>
</feature>
<feature type="chain" id="PRO_5000220397" description="Probable arabinan endo-1,5-alpha-L-arabinosidase A">
    <location>
        <begin position="20"/>
        <end position="321"/>
    </location>
</feature>
<feature type="active site" description="Proton acceptor" evidence="2">
    <location>
        <position position="34"/>
    </location>
</feature>
<feature type="active site" description="Proton donor" evidence="2">
    <location>
        <position position="200"/>
    </location>
</feature>
<feature type="site" description="Important for catalytic activity, responsible for pKa modulation of the active site Glu and correct orientation of both the proton donor and substrate" evidence="2">
    <location>
        <position position="149"/>
    </location>
</feature>
<feature type="glycosylation site" description="N-linked (GlcNAc...) asparagine" evidence="3">
    <location>
        <position position="295"/>
    </location>
</feature>
<organism>
    <name type="scientific">Aspergillus niger (strain ATCC MYA-4892 / CBS 513.88 / FGSC A1513)</name>
    <dbReference type="NCBI Taxonomy" id="425011"/>
    <lineage>
        <taxon>Eukaryota</taxon>
        <taxon>Fungi</taxon>
        <taxon>Dikarya</taxon>
        <taxon>Ascomycota</taxon>
        <taxon>Pezizomycotina</taxon>
        <taxon>Eurotiomycetes</taxon>
        <taxon>Eurotiomycetidae</taxon>
        <taxon>Eurotiales</taxon>
        <taxon>Aspergillaceae</taxon>
        <taxon>Aspergillus</taxon>
        <taxon>Aspergillus subgen. Circumdati</taxon>
    </lineage>
</organism>
<evidence type="ECO:0000250" key="1"/>
<evidence type="ECO:0000250" key="2">
    <source>
        <dbReference type="UniProtKB" id="P94522"/>
    </source>
</evidence>
<evidence type="ECO:0000255" key="3"/>
<evidence type="ECO:0000305" key="4"/>
<dbReference type="EC" id="3.2.1.99"/>
<dbReference type="EMBL" id="AM270193">
    <property type="protein sequence ID" value="CAK49041.1"/>
    <property type="molecule type" value="Genomic_DNA"/>
</dbReference>
<dbReference type="RefSeq" id="XP_001393437.1">
    <property type="nucleotide sequence ID" value="XM_001393400.2"/>
</dbReference>
<dbReference type="SMR" id="A2QT85"/>
<dbReference type="CAZy" id="GH43">
    <property type="family name" value="Glycoside Hydrolase Family 43"/>
</dbReference>
<dbReference type="GlyCosmos" id="A2QT85">
    <property type="glycosylation" value="1 site, No reported glycans"/>
</dbReference>
<dbReference type="EnsemblFungi" id="CAK49041">
    <property type="protein sequence ID" value="CAK49041"/>
    <property type="gene ID" value="An09g01190"/>
</dbReference>
<dbReference type="GeneID" id="4983650"/>
<dbReference type="KEGG" id="ang:An09g01190"/>
<dbReference type="VEuPathDB" id="FungiDB:An09g01190"/>
<dbReference type="HOGENOM" id="CLU_009397_5_0_1"/>
<dbReference type="UniPathway" id="UPA00667"/>
<dbReference type="Proteomes" id="UP000006706">
    <property type="component" value="Chromosome 1L"/>
</dbReference>
<dbReference type="GO" id="GO:0005576">
    <property type="term" value="C:extracellular region"/>
    <property type="evidence" value="ECO:0000314"/>
    <property type="project" value="AspGD"/>
</dbReference>
<dbReference type="GO" id="GO:0046558">
    <property type="term" value="F:arabinan endo-1,5-alpha-L-arabinosidase activity"/>
    <property type="evidence" value="ECO:0000314"/>
    <property type="project" value="AspGD"/>
</dbReference>
<dbReference type="GO" id="GO:0031222">
    <property type="term" value="P:arabinan catabolic process"/>
    <property type="evidence" value="ECO:0007669"/>
    <property type="project" value="UniProtKB-UniPathway"/>
</dbReference>
<dbReference type="GO" id="GO:2000895">
    <property type="term" value="P:hemicellulose catabolic process"/>
    <property type="evidence" value="ECO:0000314"/>
    <property type="project" value="AspGD"/>
</dbReference>
<dbReference type="GO" id="GO:0045493">
    <property type="term" value="P:xylan catabolic process"/>
    <property type="evidence" value="ECO:0007669"/>
    <property type="project" value="UniProtKB-KW"/>
</dbReference>
<dbReference type="CDD" id="cd18831">
    <property type="entry name" value="GH43_AnAbnA-like"/>
    <property type="match status" value="1"/>
</dbReference>
<dbReference type="FunFam" id="2.115.10.20:FF:000005">
    <property type="entry name" value="Arabinan endo-1,5-alpha-L-arabinosidase"/>
    <property type="match status" value="1"/>
</dbReference>
<dbReference type="Gene3D" id="2.115.10.20">
    <property type="entry name" value="Glycosyl hydrolase domain, family 43"/>
    <property type="match status" value="1"/>
</dbReference>
<dbReference type="InterPro" id="IPR050727">
    <property type="entry name" value="GH43_arabinanases"/>
</dbReference>
<dbReference type="InterPro" id="IPR006710">
    <property type="entry name" value="Glyco_hydro_43"/>
</dbReference>
<dbReference type="InterPro" id="IPR016840">
    <property type="entry name" value="Glyco_hydro_43_endo_a_Ara-ase"/>
</dbReference>
<dbReference type="InterPro" id="IPR023296">
    <property type="entry name" value="Glyco_hydro_beta-prop_sf"/>
</dbReference>
<dbReference type="PANTHER" id="PTHR43301">
    <property type="entry name" value="ARABINAN ENDO-1,5-ALPHA-L-ARABINOSIDASE"/>
    <property type="match status" value="1"/>
</dbReference>
<dbReference type="PANTHER" id="PTHR43301:SF3">
    <property type="entry name" value="ARABINAN ENDO-1,5-ALPHA-L-ARABINOSIDASE A-RELATED"/>
    <property type="match status" value="1"/>
</dbReference>
<dbReference type="Pfam" id="PF04616">
    <property type="entry name" value="Glyco_hydro_43"/>
    <property type="match status" value="1"/>
</dbReference>
<dbReference type="PIRSF" id="PIRSF026534">
    <property type="entry name" value="Endo_alpha-L-arabinosidase"/>
    <property type="match status" value="1"/>
</dbReference>
<dbReference type="SUPFAM" id="SSF75005">
    <property type="entry name" value="Arabinanase/levansucrase/invertase"/>
    <property type="match status" value="1"/>
</dbReference>
<gene>
    <name type="primary">abnA</name>
    <name type="ORF">An09g01190</name>
</gene>
<proteinExistence type="inferred from homology"/>
<accession>A2QT85</accession>
<keyword id="KW-0119">Carbohydrate metabolism</keyword>
<keyword id="KW-0325">Glycoprotein</keyword>
<keyword id="KW-0326">Glycosidase</keyword>
<keyword id="KW-0378">Hydrolase</keyword>
<keyword id="KW-0624">Polysaccharide degradation</keyword>
<keyword id="KW-1185">Reference proteome</keyword>
<keyword id="KW-0964">Secreted</keyword>
<keyword id="KW-0732">Signal</keyword>
<keyword id="KW-0858">Xylan degradation</keyword>
<sequence length="321" mass="34483">MYRLLSVASVPLLASLVHGYADPGACSGVCTTHDPGLIRRESDGTYFLFSTGNKISYVSASSIEGPWTSVGSMLPDGSSIDLDGNDDLWAPDVSYVDGLYYVYYAVSTFGSQDSAIGLATSETMEYGSWTDHGSTGIASSSAKIYNAIDPNLIYADGTYYINFGSFWDDIYQVPMKSTPTAAASSSYNLAYDPSGTHAEEGSYMFQYGDYYYLFYSAGICCGYDTSMPASGEEYHIKVCRSTSPTGDFVDSDGTACTDGGGTMVLESHGEVYGPGGQGVYDDPNLGPVLYYHYMNTTIGYADSDAQFGWNTIDFSSGWPVV</sequence>
<comment type="function">
    <text evidence="1">Endo-1,5-alpha-L-arabinanase involved in degradation of pectin. Its preferred substrate is linear 1,5-alpha-L-arabinan (By similarity).</text>
</comment>
<comment type="catalytic activity">
    <reaction>
        <text>Endohydrolysis of (1-&gt;5)-alpha-arabinofuranosidic linkages in (1-&gt;5)-arabinans.</text>
        <dbReference type="EC" id="3.2.1.99"/>
    </reaction>
</comment>
<comment type="pathway">
    <text>Glycan metabolism; L-arabinan degradation.</text>
</comment>
<comment type="subcellular location">
    <subcellularLocation>
        <location evidence="1">Secreted</location>
    </subcellularLocation>
</comment>
<comment type="similarity">
    <text evidence="4">Belongs to the glycosyl hydrolase 43 family.</text>
</comment>
<reference key="1">
    <citation type="journal article" date="2007" name="Nat. Biotechnol.">
        <title>Genome sequencing and analysis of the versatile cell factory Aspergillus niger CBS 513.88.</title>
        <authorList>
            <person name="Pel H.J."/>
            <person name="de Winde J.H."/>
            <person name="Archer D.B."/>
            <person name="Dyer P.S."/>
            <person name="Hofmann G."/>
            <person name="Schaap P.J."/>
            <person name="Turner G."/>
            <person name="de Vries R.P."/>
            <person name="Albang R."/>
            <person name="Albermann K."/>
            <person name="Andersen M.R."/>
            <person name="Bendtsen J.D."/>
            <person name="Benen J.A.E."/>
            <person name="van den Berg M."/>
            <person name="Breestraat S."/>
            <person name="Caddick M.X."/>
            <person name="Contreras R."/>
            <person name="Cornell M."/>
            <person name="Coutinho P.M."/>
            <person name="Danchin E.G.J."/>
            <person name="Debets A.J.M."/>
            <person name="Dekker P."/>
            <person name="van Dijck P.W.M."/>
            <person name="van Dijk A."/>
            <person name="Dijkhuizen L."/>
            <person name="Driessen A.J.M."/>
            <person name="d'Enfert C."/>
            <person name="Geysens S."/>
            <person name="Goosen C."/>
            <person name="Groot G.S.P."/>
            <person name="de Groot P.W.J."/>
            <person name="Guillemette T."/>
            <person name="Henrissat B."/>
            <person name="Herweijer M."/>
            <person name="van den Hombergh J.P.T.W."/>
            <person name="van den Hondel C.A.M.J.J."/>
            <person name="van der Heijden R.T.J.M."/>
            <person name="van der Kaaij R.M."/>
            <person name="Klis F.M."/>
            <person name="Kools H.J."/>
            <person name="Kubicek C.P."/>
            <person name="van Kuyk P.A."/>
            <person name="Lauber J."/>
            <person name="Lu X."/>
            <person name="van der Maarel M.J.E.C."/>
            <person name="Meulenberg R."/>
            <person name="Menke H."/>
            <person name="Mortimer M.A."/>
            <person name="Nielsen J."/>
            <person name="Oliver S.G."/>
            <person name="Olsthoorn M."/>
            <person name="Pal K."/>
            <person name="van Peij N.N.M.E."/>
            <person name="Ram A.F.J."/>
            <person name="Rinas U."/>
            <person name="Roubos J.A."/>
            <person name="Sagt C.M.J."/>
            <person name="Schmoll M."/>
            <person name="Sun J."/>
            <person name="Ussery D."/>
            <person name="Varga J."/>
            <person name="Vervecken W."/>
            <person name="van de Vondervoort P.J.J."/>
            <person name="Wedler H."/>
            <person name="Woesten H.A.B."/>
            <person name="Zeng A.-P."/>
            <person name="van Ooyen A.J.J."/>
            <person name="Visser J."/>
            <person name="Stam H."/>
        </authorList>
    </citation>
    <scope>NUCLEOTIDE SEQUENCE [LARGE SCALE GENOMIC DNA]</scope>
    <source>
        <strain>ATCC MYA-4892 / CBS 513.88 / FGSC A1513</strain>
    </source>
</reference>
<name>ABNA_ASPNC</name>
<protein>
    <recommendedName>
        <fullName>Probable arabinan endo-1,5-alpha-L-arabinosidase A</fullName>
        <ecNumber>3.2.1.99</ecNumber>
    </recommendedName>
    <alternativeName>
        <fullName>Endo-1,5-alpha-L-arabinanase A</fullName>
        <shortName>ABN A</shortName>
    </alternativeName>
</protein>